<keyword id="KW-0131">Cell cycle</keyword>
<keyword id="KW-0132">Cell division</keyword>
<keyword id="KW-0963">Cytoplasm</keyword>
<keyword id="KW-0206">Cytoskeleton</keyword>
<keyword id="KW-0498">Mitosis</keyword>
<keyword id="KW-0597">Phosphoprotein</keyword>
<keyword id="KW-1185">Reference proteome</keyword>
<dbReference type="EMBL" id="AJ131957">
    <property type="protein sequence ID" value="CAB65242.2"/>
    <property type="molecule type" value="mRNA"/>
</dbReference>
<dbReference type="EMBL" id="BC144812">
    <property type="protein sequence ID" value="AAI44813.1"/>
    <property type="molecule type" value="mRNA"/>
</dbReference>
<dbReference type="EMBL" id="BC145789">
    <property type="protein sequence ID" value="AAI45790.1"/>
    <property type="molecule type" value="mRNA"/>
</dbReference>
<dbReference type="EMBL" id="AK075930">
    <property type="protein sequence ID" value="BAC36061.1"/>
    <property type="status" value="ALT_INIT"/>
    <property type="molecule type" value="mRNA"/>
</dbReference>
<dbReference type="CCDS" id="CCDS37896.1"/>
<dbReference type="RefSeq" id="NP_598439.3">
    <property type="nucleotide sequence ID" value="NM_133678.3"/>
</dbReference>
<dbReference type="SMR" id="A6H687"/>
<dbReference type="BioGRID" id="211450">
    <property type="interactions" value="1"/>
</dbReference>
<dbReference type="FunCoup" id="A6H687">
    <property type="interactions" value="162"/>
</dbReference>
<dbReference type="STRING" id="10090.ENSMUSP00000109161"/>
<dbReference type="iPTMnet" id="A6H687"/>
<dbReference type="PhosphoSitePlus" id="A6H687"/>
<dbReference type="PaxDb" id="10090-ENSMUSP00000109161"/>
<dbReference type="PeptideAtlas" id="A6H687"/>
<dbReference type="ProteomicsDB" id="255452"/>
<dbReference type="GeneID" id="66406"/>
<dbReference type="KEGG" id="mmu:66406"/>
<dbReference type="AGR" id="MGI:1913656"/>
<dbReference type="CTD" id="29901"/>
<dbReference type="MGI" id="MGI:1913656">
    <property type="gene designation" value="Sac3d1"/>
</dbReference>
<dbReference type="eggNOG" id="KOG1860">
    <property type="taxonomic scope" value="Eukaryota"/>
</dbReference>
<dbReference type="InParanoid" id="A6H687"/>
<dbReference type="OrthoDB" id="264795at2759"/>
<dbReference type="PhylomeDB" id="A6H687"/>
<dbReference type="BioGRID-ORCS" id="66406">
    <property type="hits" value="2 hits in 80 CRISPR screens"/>
</dbReference>
<dbReference type="CD-CODE" id="01CA17F3">
    <property type="entry name" value="Centrosome"/>
</dbReference>
<dbReference type="PRO" id="PR:A6H687"/>
<dbReference type="Proteomes" id="UP000000589">
    <property type="component" value="Unplaced"/>
</dbReference>
<dbReference type="RNAct" id="A6H687">
    <property type="molecule type" value="protein"/>
</dbReference>
<dbReference type="GO" id="GO:0005813">
    <property type="term" value="C:centrosome"/>
    <property type="evidence" value="ECO:0000314"/>
    <property type="project" value="MGI"/>
</dbReference>
<dbReference type="GO" id="GO:0005737">
    <property type="term" value="C:cytoplasm"/>
    <property type="evidence" value="ECO:0007669"/>
    <property type="project" value="UniProtKB-KW"/>
</dbReference>
<dbReference type="GO" id="GO:0015630">
    <property type="term" value="C:microtubule cytoskeleton"/>
    <property type="evidence" value="ECO:0000314"/>
    <property type="project" value="MGI"/>
</dbReference>
<dbReference type="GO" id="GO:0005634">
    <property type="term" value="C:nucleus"/>
    <property type="evidence" value="ECO:0000314"/>
    <property type="project" value="MGI"/>
</dbReference>
<dbReference type="GO" id="GO:0005819">
    <property type="term" value="C:spindle"/>
    <property type="evidence" value="ECO:0000314"/>
    <property type="project" value="MGI"/>
</dbReference>
<dbReference type="GO" id="GO:0051301">
    <property type="term" value="P:cell division"/>
    <property type="evidence" value="ECO:0007669"/>
    <property type="project" value="UniProtKB-KW"/>
</dbReference>
<dbReference type="GO" id="GO:0051298">
    <property type="term" value="P:centrosome duplication"/>
    <property type="evidence" value="ECO:0000315"/>
    <property type="project" value="MGI"/>
</dbReference>
<dbReference type="GO" id="GO:0046426">
    <property type="term" value="P:negative regulation of receptor signaling pathway via JAK-STAT"/>
    <property type="evidence" value="ECO:0000314"/>
    <property type="project" value="MGI"/>
</dbReference>
<dbReference type="GO" id="GO:0050776">
    <property type="term" value="P:regulation of immune response"/>
    <property type="evidence" value="ECO:0000315"/>
    <property type="project" value="MGI"/>
</dbReference>
<dbReference type="GO" id="GO:0051225">
    <property type="term" value="P:spindle assembly"/>
    <property type="evidence" value="ECO:0000315"/>
    <property type="project" value="MGI"/>
</dbReference>
<dbReference type="Gene3D" id="1.25.40.990">
    <property type="match status" value="1"/>
</dbReference>
<dbReference type="InterPro" id="IPR000717">
    <property type="entry name" value="PCI_dom"/>
</dbReference>
<dbReference type="InterPro" id="IPR045107">
    <property type="entry name" value="SAC3/GANP/THP3"/>
</dbReference>
<dbReference type="InterPro" id="IPR005062">
    <property type="entry name" value="SAC3/GANP/THP3_conserved"/>
</dbReference>
<dbReference type="PANTHER" id="PTHR12436">
    <property type="entry name" value="80 KDA MCM3-ASSOCIATED PROTEIN"/>
    <property type="match status" value="1"/>
</dbReference>
<dbReference type="PANTHER" id="PTHR12436:SF38">
    <property type="entry name" value="SAC3 DOMAIN-CONTAINING PROTEIN 1"/>
    <property type="match status" value="1"/>
</dbReference>
<dbReference type="Pfam" id="PF03399">
    <property type="entry name" value="SAC3_GANP"/>
    <property type="match status" value="1"/>
</dbReference>
<dbReference type="PROSITE" id="PS50250">
    <property type="entry name" value="PCI"/>
    <property type="match status" value="1"/>
</dbReference>
<proteinExistence type="evidence at protein level"/>
<name>SAC31_MOUSE</name>
<sequence>MGRFKGENRSQARWIMGGVSKGRGSGKSRKPRQAAFGQTGARVCPSSPQQDAVPRFRWPGDAECASSTHTPTMSGCKLPMGLCPDMCPAAERARRERERRLHRLEVEPGGRGNAPRADPKRTVKEYSRPAAGKPRPPPSLLRPPPVLLATVRYLAGEVAGRGDVSCAEVASFVADRLRAVRLDLSLQGVDDADAATVLEAALATLLAVVARVRPEETRGAADPVLLQTQVQEGFGSLRRCYARGKGPYPRQAAFQGLFLLYNLGSVEALQEVLQLPAALRACPPLQAALAVDAAFREDNHARLFRLLRTLPYLQSCAVQEHIGYARRKALARLSRALSTPKGQTLPLDFIEHFLALDGLQEARDLCQAHGLTLDKDRVVFLRGQYSEEGLPPPGAYHILVGNKLQGHTLEDVVMAEEGDIHRPGSAA</sequence>
<organism>
    <name type="scientific">Mus musculus</name>
    <name type="common">Mouse</name>
    <dbReference type="NCBI Taxonomy" id="10090"/>
    <lineage>
        <taxon>Eukaryota</taxon>
        <taxon>Metazoa</taxon>
        <taxon>Chordata</taxon>
        <taxon>Craniata</taxon>
        <taxon>Vertebrata</taxon>
        <taxon>Euteleostomi</taxon>
        <taxon>Mammalia</taxon>
        <taxon>Eutheria</taxon>
        <taxon>Euarchontoglires</taxon>
        <taxon>Glires</taxon>
        <taxon>Rodentia</taxon>
        <taxon>Myomorpha</taxon>
        <taxon>Muroidea</taxon>
        <taxon>Muridae</taxon>
        <taxon>Murinae</taxon>
        <taxon>Mus</taxon>
        <taxon>Mus</taxon>
    </lineage>
</organism>
<feature type="chain" id="PRO_0000308205" description="SAC3 domain-containing protein 1">
    <location>
        <begin position="1"/>
        <end position="427"/>
    </location>
</feature>
<feature type="domain" description="PCI" evidence="3">
    <location>
        <begin position="229"/>
        <end position="397"/>
    </location>
</feature>
<feature type="region of interest" description="Disordered" evidence="4">
    <location>
        <begin position="1"/>
        <end position="53"/>
    </location>
</feature>
<feature type="region of interest" description="Disordered" evidence="4">
    <location>
        <begin position="101"/>
        <end position="143"/>
    </location>
</feature>
<feature type="compositionally biased region" description="Basic and acidic residues" evidence="4">
    <location>
        <begin position="1"/>
        <end position="10"/>
    </location>
</feature>
<feature type="compositionally biased region" description="Basic and acidic residues" evidence="4">
    <location>
        <begin position="117"/>
        <end position="127"/>
    </location>
</feature>
<feature type="compositionally biased region" description="Pro residues" evidence="4">
    <location>
        <begin position="134"/>
        <end position="143"/>
    </location>
</feature>
<feature type="modified residue" description="Phosphoserine" evidence="2">
    <location>
        <position position="425"/>
    </location>
</feature>
<feature type="sequence conflict" description="In Ref. 1; CAB65242." evidence="6" ref="1">
    <original>Q</original>
    <variation>R</variation>
    <location>
        <position position="49"/>
    </location>
</feature>
<feature type="sequence conflict" description="In Ref. 1; CAB65242." evidence="6" ref="1">
    <original>VEALQEVLQLP</original>
    <variation>LEAPAGGST</variation>
    <location>
        <begin position="266"/>
        <end position="276"/>
    </location>
</feature>
<protein>
    <recommendedName>
        <fullName>SAC3 domain-containing protein 1</fullName>
    </recommendedName>
    <alternativeName>
        <fullName>SAC3 homology domain-containing protein 1</fullName>
    </alternativeName>
</protein>
<comment type="function">
    <text evidence="5">Involved in centrosome duplication and mitotic progression.</text>
</comment>
<comment type="subunit">
    <text evidence="1">May be part of a SEM1-containing complex.</text>
</comment>
<comment type="subcellular location">
    <subcellularLocation>
        <location evidence="5">Cytoplasm</location>
        <location evidence="5">Cytoskeleton</location>
        <location evidence="5">Microtubule organizing center</location>
        <location evidence="5">Centrosome</location>
    </subcellularLocation>
    <subcellularLocation>
        <location evidence="5">Cytoplasm</location>
        <location evidence="5">Cytoskeleton</location>
        <location evidence="5">Spindle</location>
    </subcellularLocation>
    <text>Localizes on centrosomes in interphase cells and at spindles in mitosis.</text>
</comment>
<comment type="tissue specificity">
    <text evidence="5">Present in spleen cells (at protein level).</text>
</comment>
<comment type="similarity">
    <text evidence="6">Belongs to the SAC3 family.</text>
</comment>
<comment type="sequence caution" evidence="6">
    <conflict type="erroneous initiation">
        <sequence resource="EMBL-CDS" id="BAC36061"/>
    </conflict>
</comment>
<gene>
    <name type="primary">Sac3d1</name>
    <name type="synonym">Shd1</name>
</gene>
<evidence type="ECO:0000250" key="1"/>
<evidence type="ECO:0000250" key="2">
    <source>
        <dbReference type="UniProtKB" id="A6NKF1"/>
    </source>
</evidence>
<evidence type="ECO:0000255" key="3">
    <source>
        <dbReference type="PROSITE-ProRule" id="PRU01185"/>
    </source>
</evidence>
<evidence type="ECO:0000256" key="4">
    <source>
        <dbReference type="SAM" id="MobiDB-lite"/>
    </source>
</evidence>
<evidence type="ECO:0000269" key="5">
    <source>
    </source>
</evidence>
<evidence type="ECO:0000305" key="6"/>
<reference key="1">
    <citation type="journal article" date="2004" name="J. Biol. Chem.">
        <title>The Sac3 homologue shd1 is involved in mitotic progression in mammalian cells.</title>
        <authorList>
            <person name="Khuda S.E."/>
            <person name="Yoshida M."/>
            <person name="Xing Y."/>
            <person name="Shimasaki T."/>
            <person name="Takeya M."/>
            <person name="Kuwahara K."/>
            <person name="Sakaguchi N."/>
        </authorList>
    </citation>
    <scope>NUCLEOTIDE SEQUENCE [MRNA]</scope>
    <scope>FUNCTION</scope>
    <scope>TISSUE SPECIFICITY</scope>
    <scope>SUBCELLULAR LOCATION</scope>
    <source>
        <strain>C57BL/6J</strain>
    </source>
</reference>
<reference key="2">
    <citation type="journal article" date="2004" name="Genome Res.">
        <title>The status, quality, and expansion of the NIH full-length cDNA project: the Mammalian Gene Collection (MGC).</title>
        <authorList>
            <consortium name="The MGC Project Team"/>
        </authorList>
    </citation>
    <scope>NUCLEOTIDE SEQUENCE [LARGE SCALE MRNA]</scope>
    <source>
        <tissue>Brain</tissue>
    </source>
</reference>
<reference key="3">
    <citation type="journal article" date="2005" name="Science">
        <title>The transcriptional landscape of the mammalian genome.</title>
        <authorList>
            <person name="Carninci P."/>
            <person name="Kasukawa T."/>
            <person name="Katayama S."/>
            <person name="Gough J."/>
            <person name="Frith M.C."/>
            <person name="Maeda N."/>
            <person name="Oyama R."/>
            <person name="Ravasi T."/>
            <person name="Lenhard B."/>
            <person name="Wells C."/>
            <person name="Kodzius R."/>
            <person name="Shimokawa K."/>
            <person name="Bajic V.B."/>
            <person name="Brenner S.E."/>
            <person name="Batalov S."/>
            <person name="Forrest A.R."/>
            <person name="Zavolan M."/>
            <person name="Davis M.J."/>
            <person name="Wilming L.G."/>
            <person name="Aidinis V."/>
            <person name="Allen J.E."/>
            <person name="Ambesi-Impiombato A."/>
            <person name="Apweiler R."/>
            <person name="Aturaliya R.N."/>
            <person name="Bailey T.L."/>
            <person name="Bansal M."/>
            <person name="Baxter L."/>
            <person name="Beisel K.W."/>
            <person name="Bersano T."/>
            <person name="Bono H."/>
            <person name="Chalk A.M."/>
            <person name="Chiu K.P."/>
            <person name="Choudhary V."/>
            <person name="Christoffels A."/>
            <person name="Clutterbuck D.R."/>
            <person name="Crowe M.L."/>
            <person name="Dalla E."/>
            <person name="Dalrymple B.P."/>
            <person name="de Bono B."/>
            <person name="Della Gatta G."/>
            <person name="di Bernardo D."/>
            <person name="Down T."/>
            <person name="Engstrom P."/>
            <person name="Fagiolini M."/>
            <person name="Faulkner G."/>
            <person name="Fletcher C.F."/>
            <person name="Fukushima T."/>
            <person name="Furuno M."/>
            <person name="Futaki S."/>
            <person name="Gariboldi M."/>
            <person name="Georgii-Hemming P."/>
            <person name="Gingeras T.R."/>
            <person name="Gojobori T."/>
            <person name="Green R.E."/>
            <person name="Gustincich S."/>
            <person name="Harbers M."/>
            <person name="Hayashi Y."/>
            <person name="Hensch T.K."/>
            <person name="Hirokawa N."/>
            <person name="Hill D."/>
            <person name="Huminiecki L."/>
            <person name="Iacono M."/>
            <person name="Ikeo K."/>
            <person name="Iwama A."/>
            <person name="Ishikawa T."/>
            <person name="Jakt M."/>
            <person name="Kanapin A."/>
            <person name="Katoh M."/>
            <person name="Kawasawa Y."/>
            <person name="Kelso J."/>
            <person name="Kitamura H."/>
            <person name="Kitano H."/>
            <person name="Kollias G."/>
            <person name="Krishnan S.P."/>
            <person name="Kruger A."/>
            <person name="Kummerfeld S.K."/>
            <person name="Kurochkin I.V."/>
            <person name="Lareau L.F."/>
            <person name="Lazarevic D."/>
            <person name="Lipovich L."/>
            <person name="Liu J."/>
            <person name="Liuni S."/>
            <person name="McWilliam S."/>
            <person name="Madan Babu M."/>
            <person name="Madera M."/>
            <person name="Marchionni L."/>
            <person name="Matsuda H."/>
            <person name="Matsuzawa S."/>
            <person name="Miki H."/>
            <person name="Mignone F."/>
            <person name="Miyake S."/>
            <person name="Morris K."/>
            <person name="Mottagui-Tabar S."/>
            <person name="Mulder N."/>
            <person name="Nakano N."/>
            <person name="Nakauchi H."/>
            <person name="Ng P."/>
            <person name="Nilsson R."/>
            <person name="Nishiguchi S."/>
            <person name="Nishikawa S."/>
            <person name="Nori F."/>
            <person name="Ohara O."/>
            <person name="Okazaki Y."/>
            <person name="Orlando V."/>
            <person name="Pang K.C."/>
            <person name="Pavan W.J."/>
            <person name="Pavesi G."/>
            <person name="Pesole G."/>
            <person name="Petrovsky N."/>
            <person name="Piazza S."/>
            <person name="Reed J."/>
            <person name="Reid J.F."/>
            <person name="Ring B.Z."/>
            <person name="Ringwald M."/>
            <person name="Rost B."/>
            <person name="Ruan Y."/>
            <person name="Salzberg S.L."/>
            <person name="Sandelin A."/>
            <person name="Schneider C."/>
            <person name="Schoenbach C."/>
            <person name="Sekiguchi K."/>
            <person name="Semple C.A."/>
            <person name="Seno S."/>
            <person name="Sessa L."/>
            <person name="Sheng Y."/>
            <person name="Shibata Y."/>
            <person name="Shimada H."/>
            <person name="Shimada K."/>
            <person name="Silva D."/>
            <person name="Sinclair B."/>
            <person name="Sperling S."/>
            <person name="Stupka E."/>
            <person name="Sugiura K."/>
            <person name="Sultana R."/>
            <person name="Takenaka Y."/>
            <person name="Taki K."/>
            <person name="Tammoja K."/>
            <person name="Tan S.L."/>
            <person name="Tang S."/>
            <person name="Taylor M.S."/>
            <person name="Tegner J."/>
            <person name="Teichmann S.A."/>
            <person name="Ueda H.R."/>
            <person name="van Nimwegen E."/>
            <person name="Verardo R."/>
            <person name="Wei C.L."/>
            <person name="Yagi K."/>
            <person name="Yamanishi H."/>
            <person name="Zabarovsky E."/>
            <person name="Zhu S."/>
            <person name="Zimmer A."/>
            <person name="Hide W."/>
            <person name="Bult C."/>
            <person name="Grimmond S.M."/>
            <person name="Teasdale R.D."/>
            <person name="Liu E.T."/>
            <person name="Brusic V."/>
            <person name="Quackenbush J."/>
            <person name="Wahlestedt C."/>
            <person name="Mattick J.S."/>
            <person name="Hume D.A."/>
            <person name="Kai C."/>
            <person name="Sasaki D."/>
            <person name="Tomaru Y."/>
            <person name="Fukuda S."/>
            <person name="Kanamori-Katayama M."/>
            <person name="Suzuki M."/>
            <person name="Aoki J."/>
            <person name="Arakawa T."/>
            <person name="Iida J."/>
            <person name="Imamura K."/>
            <person name="Itoh M."/>
            <person name="Kato T."/>
            <person name="Kawaji H."/>
            <person name="Kawagashira N."/>
            <person name="Kawashima T."/>
            <person name="Kojima M."/>
            <person name="Kondo S."/>
            <person name="Konno H."/>
            <person name="Nakano K."/>
            <person name="Ninomiya N."/>
            <person name="Nishio T."/>
            <person name="Okada M."/>
            <person name="Plessy C."/>
            <person name="Shibata K."/>
            <person name="Shiraki T."/>
            <person name="Suzuki S."/>
            <person name="Tagami M."/>
            <person name="Waki K."/>
            <person name="Watahiki A."/>
            <person name="Okamura-Oho Y."/>
            <person name="Suzuki H."/>
            <person name="Kawai J."/>
            <person name="Hayashizaki Y."/>
        </authorList>
    </citation>
    <scope>NUCLEOTIDE SEQUENCE [LARGE SCALE MRNA] OF 15-427</scope>
    <source>
        <strain>C57BL/6J</strain>
    </source>
</reference>
<accession>A6H687</accession>
<accession>B7ZMU9</accession>
<accession>Q8BVY1</accession>
<accession>Q9QXE1</accession>